<proteinExistence type="inferred from homology"/>
<keyword id="KW-1185">Reference proteome</keyword>
<keyword id="KW-0687">Ribonucleoprotein</keyword>
<keyword id="KW-0689">Ribosomal protein</keyword>
<keyword id="KW-0694">RNA-binding</keyword>
<keyword id="KW-0699">rRNA-binding</keyword>
<gene>
    <name evidence="1" type="primary">rpsK</name>
    <name type="ordered locus">Nmul_A0790</name>
</gene>
<name>RS11_NITMU</name>
<dbReference type="EMBL" id="CP000103">
    <property type="protein sequence ID" value="ABB74097.1"/>
    <property type="molecule type" value="Genomic_DNA"/>
</dbReference>
<dbReference type="RefSeq" id="WP_011380146.1">
    <property type="nucleotide sequence ID" value="NC_007614.1"/>
</dbReference>
<dbReference type="SMR" id="Q2YAX4"/>
<dbReference type="STRING" id="323848.Nmul_A0790"/>
<dbReference type="KEGG" id="nmu:Nmul_A0790"/>
<dbReference type="eggNOG" id="COG0100">
    <property type="taxonomic scope" value="Bacteria"/>
</dbReference>
<dbReference type="HOGENOM" id="CLU_072439_5_0_4"/>
<dbReference type="OrthoDB" id="9806415at2"/>
<dbReference type="Proteomes" id="UP000002718">
    <property type="component" value="Chromosome"/>
</dbReference>
<dbReference type="GO" id="GO:1990904">
    <property type="term" value="C:ribonucleoprotein complex"/>
    <property type="evidence" value="ECO:0007669"/>
    <property type="project" value="UniProtKB-KW"/>
</dbReference>
<dbReference type="GO" id="GO:0005840">
    <property type="term" value="C:ribosome"/>
    <property type="evidence" value="ECO:0007669"/>
    <property type="project" value="UniProtKB-KW"/>
</dbReference>
<dbReference type="GO" id="GO:0019843">
    <property type="term" value="F:rRNA binding"/>
    <property type="evidence" value="ECO:0007669"/>
    <property type="project" value="UniProtKB-UniRule"/>
</dbReference>
<dbReference type="GO" id="GO:0003735">
    <property type="term" value="F:structural constituent of ribosome"/>
    <property type="evidence" value="ECO:0007669"/>
    <property type="project" value="InterPro"/>
</dbReference>
<dbReference type="GO" id="GO:0006412">
    <property type="term" value="P:translation"/>
    <property type="evidence" value="ECO:0007669"/>
    <property type="project" value="UniProtKB-UniRule"/>
</dbReference>
<dbReference type="FunFam" id="3.30.420.80:FF:000001">
    <property type="entry name" value="30S ribosomal protein S11"/>
    <property type="match status" value="1"/>
</dbReference>
<dbReference type="Gene3D" id="3.30.420.80">
    <property type="entry name" value="Ribosomal protein S11"/>
    <property type="match status" value="1"/>
</dbReference>
<dbReference type="HAMAP" id="MF_01310">
    <property type="entry name" value="Ribosomal_uS11"/>
    <property type="match status" value="1"/>
</dbReference>
<dbReference type="InterPro" id="IPR001971">
    <property type="entry name" value="Ribosomal_uS11"/>
</dbReference>
<dbReference type="InterPro" id="IPR019981">
    <property type="entry name" value="Ribosomal_uS11_bac-type"/>
</dbReference>
<dbReference type="InterPro" id="IPR018102">
    <property type="entry name" value="Ribosomal_uS11_CS"/>
</dbReference>
<dbReference type="InterPro" id="IPR036967">
    <property type="entry name" value="Ribosomal_uS11_sf"/>
</dbReference>
<dbReference type="NCBIfam" id="NF003698">
    <property type="entry name" value="PRK05309.1"/>
    <property type="match status" value="1"/>
</dbReference>
<dbReference type="NCBIfam" id="TIGR03632">
    <property type="entry name" value="uS11_bact"/>
    <property type="match status" value="1"/>
</dbReference>
<dbReference type="PANTHER" id="PTHR11759">
    <property type="entry name" value="40S RIBOSOMAL PROTEIN S14/30S RIBOSOMAL PROTEIN S11"/>
    <property type="match status" value="1"/>
</dbReference>
<dbReference type="Pfam" id="PF00411">
    <property type="entry name" value="Ribosomal_S11"/>
    <property type="match status" value="1"/>
</dbReference>
<dbReference type="PIRSF" id="PIRSF002131">
    <property type="entry name" value="Ribosomal_S11"/>
    <property type="match status" value="1"/>
</dbReference>
<dbReference type="SUPFAM" id="SSF53137">
    <property type="entry name" value="Translational machinery components"/>
    <property type="match status" value="1"/>
</dbReference>
<dbReference type="PROSITE" id="PS00054">
    <property type="entry name" value="RIBOSOMAL_S11"/>
    <property type="match status" value="1"/>
</dbReference>
<evidence type="ECO:0000255" key="1">
    <source>
        <dbReference type="HAMAP-Rule" id="MF_01310"/>
    </source>
</evidence>
<evidence type="ECO:0000305" key="2"/>
<protein>
    <recommendedName>
        <fullName evidence="1">Small ribosomal subunit protein uS11</fullName>
    </recommendedName>
    <alternativeName>
        <fullName evidence="2">30S ribosomal protein S11</fullName>
    </alternativeName>
</protein>
<organism>
    <name type="scientific">Nitrosospira multiformis (strain ATCC 25196 / NCIMB 11849 / C 71)</name>
    <dbReference type="NCBI Taxonomy" id="323848"/>
    <lineage>
        <taxon>Bacteria</taxon>
        <taxon>Pseudomonadati</taxon>
        <taxon>Pseudomonadota</taxon>
        <taxon>Betaproteobacteria</taxon>
        <taxon>Nitrosomonadales</taxon>
        <taxon>Nitrosomonadaceae</taxon>
        <taxon>Nitrosospira</taxon>
    </lineage>
</organism>
<feature type="chain" id="PRO_0000230412" description="Small ribosomal subunit protein uS11">
    <location>
        <begin position="1"/>
        <end position="129"/>
    </location>
</feature>
<comment type="function">
    <text evidence="1">Located on the platform of the 30S subunit, it bridges several disparate RNA helices of the 16S rRNA. Forms part of the Shine-Dalgarno cleft in the 70S ribosome.</text>
</comment>
<comment type="subunit">
    <text evidence="1">Part of the 30S ribosomal subunit. Interacts with proteins S7 and S18. Binds to IF-3.</text>
</comment>
<comment type="similarity">
    <text evidence="1">Belongs to the universal ribosomal protein uS11 family.</text>
</comment>
<reference key="1">
    <citation type="submission" date="2005-08" db="EMBL/GenBank/DDBJ databases">
        <title>Complete sequence of chromosome 1 of Nitrosospira multiformis ATCC 25196.</title>
        <authorList>
            <person name="Copeland A."/>
            <person name="Lucas S."/>
            <person name="Lapidus A."/>
            <person name="Barry K."/>
            <person name="Detter J.C."/>
            <person name="Glavina T."/>
            <person name="Hammon N."/>
            <person name="Israni S."/>
            <person name="Pitluck S."/>
            <person name="Chain P."/>
            <person name="Malfatti S."/>
            <person name="Shin M."/>
            <person name="Vergez L."/>
            <person name="Schmutz J."/>
            <person name="Larimer F."/>
            <person name="Land M."/>
            <person name="Hauser L."/>
            <person name="Kyrpides N."/>
            <person name="Lykidis A."/>
            <person name="Richardson P."/>
        </authorList>
    </citation>
    <scope>NUCLEOTIDE SEQUENCE [LARGE SCALE GENOMIC DNA]</scope>
    <source>
        <strain>ATCC 25196 / NCIMB 11849 / C 71</strain>
    </source>
</reference>
<sequence>MVKAATRVRKKVKKNVAEGIAHVHASFNNTIVTITDRQGNALSWATSGGAGFKGSRKSTPFAAQVAAEQAGRAAQEYGVKNLEVRIKGPGPGRESAVRALNAAGFKITSISDVTPVPHNGCRPPKKRRI</sequence>
<accession>Q2YAX4</accession>